<accession>B3VSG7</accession>
<accession>A0A384JAW2</accession>
<organism>
    <name type="scientific">Botryotinia fuckeliana (strain B05.10)</name>
    <name type="common">Noble rot fungus</name>
    <name type="synonym">Botrytis cinerea</name>
    <dbReference type="NCBI Taxonomy" id="332648"/>
    <lineage>
        <taxon>Eukaryota</taxon>
        <taxon>Fungi</taxon>
        <taxon>Dikarya</taxon>
        <taxon>Ascomycota</taxon>
        <taxon>Pezizomycotina</taxon>
        <taxon>Leotiomycetes</taxon>
        <taxon>Helotiales</taxon>
        <taxon>Sclerotiniaceae</taxon>
        <taxon>Botrytis</taxon>
    </lineage>
</organism>
<gene>
    <name evidence="10" type="primary">xyn11A</name>
    <name type="synonym">xynB</name>
</gene>
<evidence type="ECO:0000255" key="1"/>
<evidence type="ECO:0000255" key="2">
    <source>
        <dbReference type="PROSITE-ProRule" id="PRU01097"/>
    </source>
</evidence>
<evidence type="ECO:0000255" key="3">
    <source>
        <dbReference type="PROSITE-ProRule" id="PRU10062"/>
    </source>
</evidence>
<evidence type="ECO:0000269" key="4">
    <source>
    </source>
</evidence>
<evidence type="ECO:0000269" key="5">
    <source>
    </source>
</evidence>
<evidence type="ECO:0000269" key="6">
    <source>
    </source>
</evidence>
<evidence type="ECO:0000269" key="7">
    <source>
    </source>
</evidence>
<evidence type="ECO:0000269" key="8">
    <source>
    </source>
</evidence>
<evidence type="ECO:0000269" key="9">
    <source>
    </source>
</evidence>
<evidence type="ECO:0000303" key="10">
    <source>
    </source>
</evidence>
<evidence type="ECO:0000305" key="11"/>
<evidence type="ECO:0000305" key="12">
    <source>
    </source>
</evidence>
<name>XY11A_BOTFB</name>
<proteinExistence type="evidence at protein level"/>
<reference key="1">
    <citation type="journal article" date="2005" name="Biochem. Biophys. Res. Commun.">
        <title>A family 11 xylanase from the pathogen Botrytis cinerea is inhibited by plant endoxylanase inhibitors XIP-I and TAXI-I.</title>
        <authorList>
            <person name="Brutus A."/>
            <person name="Reca I.B."/>
            <person name="Herga S."/>
            <person name="Mattei B."/>
            <person name="Puigserver A."/>
            <person name="Chaix J.C."/>
            <person name="Juge N."/>
            <person name="Bellincampi D."/>
            <person name="Giardina T."/>
        </authorList>
    </citation>
    <scope>NUCLEOTIDE SEQUENCE [MRNA]</scope>
    <scope>PROTEIN SEQUENCE OF 37-43</scope>
    <scope>SUBCELLULAR LOCATION</scope>
    <scope>IDENTIFICATION BY MASS SPECTROMETRY</scope>
    <scope>INDUCTION</scope>
    <scope>FUNCTION</scope>
    <scope>CATALYTIC ACTIVITY</scope>
    <scope>BIOPHYSICOCHEMICAL PROPERTIES</scope>
    <scope>ACTIVITY REGULATION</scope>
</reference>
<reference key="2">
    <citation type="journal article" date="2011" name="PLoS Genet.">
        <title>Genomic analysis of the necrotrophic fungal pathogens Sclerotinia sclerotiorum and Botrytis cinerea.</title>
        <authorList>
            <person name="Amselem J."/>
            <person name="Cuomo C.A."/>
            <person name="van Kan J.A.L."/>
            <person name="Viaud M."/>
            <person name="Benito E.P."/>
            <person name="Couloux A."/>
            <person name="Coutinho P.M."/>
            <person name="de Vries R.P."/>
            <person name="Dyer P.S."/>
            <person name="Fillinger S."/>
            <person name="Fournier E."/>
            <person name="Gout L."/>
            <person name="Hahn M."/>
            <person name="Kohn L."/>
            <person name="Lapalu N."/>
            <person name="Plummer K.M."/>
            <person name="Pradier J.-M."/>
            <person name="Quevillon E."/>
            <person name="Sharon A."/>
            <person name="Simon A."/>
            <person name="ten Have A."/>
            <person name="Tudzynski B."/>
            <person name="Tudzynski P."/>
            <person name="Wincker P."/>
            <person name="Andrew M."/>
            <person name="Anthouard V."/>
            <person name="Beever R.E."/>
            <person name="Beffa R."/>
            <person name="Benoit I."/>
            <person name="Bouzid O."/>
            <person name="Brault B."/>
            <person name="Chen Z."/>
            <person name="Choquer M."/>
            <person name="Collemare J."/>
            <person name="Cotton P."/>
            <person name="Danchin E.G."/>
            <person name="Da Silva C."/>
            <person name="Gautier A."/>
            <person name="Giraud C."/>
            <person name="Giraud T."/>
            <person name="Gonzalez C."/>
            <person name="Grossetete S."/>
            <person name="Gueldener U."/>
            <person name="Henrissat B."/>
            <person name="Howlett B.J."/>
            <person name="Kodira C."/>
            <person name="Kretschmer M."/>
            <person name="Lappartient A."/>
            <person name="Leroch M."/>
            <person name="Levis C."/>
            <person name="Mauceli E."/>
            <person name="Neuveglise C."/>
            <person name="Oeser B."/>
            <person name="Pearson M."/>
            <person name="Poulain J."/>
            <person name="Poussereau N."/>
            <person name="Quesneville H."/>
            <person name="Rascle C."/>
            <person name="Schumacher J."/>
            <person name="Segurens B."/>
            <person name="Sexton A."/>
            <person name="Silva E."/>
            <person name="Sirven C."/>
            <person name="Soanes D.M."/>
            <person name="Talbot N.J."/>
            <person name="Templeton M."/>
            <person name="Yandava C."/>
            <person name="Yarden O."/>
            <person name="Zeng Q."/>
            <person name="Rollins J.A."/>
            <person name="Lebrun M.-H."/>
            <person name="Dickman M."/>
        </authorList>
    </citation>
    <scope>NUCLEOTIDE SEQUENCE [LARGE SCALE GENOMIC DNA]</scope>
    <source>
        <strain>B05.10</strain>
    </source>
</reference>
<reference key="3">
    <citation type="journal article" date="2012" name="Eukaryot. Cell">
        <title>Genome update of Botrytis cinerea strains B05.10 and T4.</title>
        <authorList>
            <person name="Staats M."/>
            <person name="van Kan J.A.L."/>
        </authorList>
    </citation>
    <scope>NUCLEOTIDE SEQUENCE [LARGE SCALE GENOMIC DNA]</scope>
    <source>
        <strain>B05.10</strain>
    </source>
</reference>
<reference key="4">
    <citation type="journal article" date="2017" name="Mol. Plant Pathol.">
        <title>A gapless genome sequence of the fungus Botrytis cinerea.</title>
        <authorList>
            <person name="van Kan J.A.L."/>
            <person name="Stassen J.H.M."/>
            <person name="Mosbach A."/>
            <person name="van der Lee T.A.J."/>
            <person name="Faino L."/>
            <person name="Farmer A.D."/>
            <person name="Papasotiriou D.G."/>
            <person name="Zhou S."/>
            <person name="Seidl M.F."/>
            <person name="Cottam E."/>
            <person name="Edel D."/>
            <person name="Hahn M."/>
            <person name="Schwartz D.C."/>
            <person name="Dietrich R.A."/>
            <person name="Widdison S."/>
            <person name="Scalliet G."/>
        </authorList>
    </citation>
    <scope>NUCLEOTIDE SEQUENCE [LARGE SCALE GENOMIC DNA]</scope>
    <source>
        <strain>B05.10</strain>
    </source>
</reference>
<reference key="5">
    <citation type="journal article" date="2006" name="Mol. Plant Microbe Interact.">
        <title>The endo-beta-1,4-xylanase xyn11A is required for virulence in Botrytis cinerea.</title>
        <authorList>
            <person name="Brito N."/>
            <person name="Espino J.J."/>
            <person name="Gonzalez C."/>
        </authorList>
    </citation>
    <scope>FUNCTION</scope>
    <scope>DISRUPTION PHENOTYPE</scope>
</reference>
<reference key="6">
    <citation type="journal article" date="2010" name="BMC Plant Biol.">
        <title>The Botrytis cinerea xylanase Xyn11A contributes to virulence with its necrotizing activity, not with its catalytic activity.</title>
        <authorList>
            <person name="Noda J."/>
            <person name="Brito N."/>
            <person name="Gonzalez C."/>
        </authorList>
    </citation>
    <scope>FUNCTION</scope>
    <scope>CATALYTIC ACTIVITY</scope>
    <scope>SUBCELLULAR LOCATION</scope>
    <scope>DOMAIN</scope>
    <scope>MUTAGENESIS OF GLU-122 AND GLU-214</scope>
</reference>
<reference key="7">
    <citation type="journal article" date="2019" name="Front. Plant Sci.">
        <title>A 25-Residue Peptide From Botrytis cinerea Xylanase BcXyn11A Elicits Plant Defenses.</title>
        <authorList>
            <person name="Frias M."/>
            <person name="Gonzalez M."/>
            <person name="Gonzalez C."/>
            <person name="Brito N."/>
        </authorList>
    </citation>
    <scope>FUNCTION</scope>
    <scope>DOMAIN</scope>
</reference>
<reference key="8">
    <citation type="journal article" date="2019" name="Plant Dis.">
        <title>Stimulatory Effects of Sublethal Doses of Carbendazim on the Virulence and Sclerotial Production of Botrytis cinerea.</title>
        <authorList>
            <person name="Cong M."/>
            <person name="Zhang B."/>
            <person name="Zhang K."/>
            <person name="Li G."/>
            <person name="Zhu F."/>
        </authorList>
    </citation>
    <scope>INDUCTION</scope>
</reference>
<reference key="9">
    <citation type="journal article" date="2021" name="J. Integr. Plant Biol.">
        <title>Nicotiana benthamiana LRR-RLP NbEIX2 mediates the perception of an EIX-like protein from Verticillium dahliae.</title>
        <authorList>
            <person name="Yin Z."/>
            <person name="Wang N."/>
            <person name="Pi L."/>
            <person name="Li L."/>
            <person name="Duan W."/>
            <person name="Wang X."/>
            <person name="Dou D."/>
        </authorList>
    </citation>
    <scope>FUNCTION</scope>
</reference>
<protein>
    <recommendedName>
        <fullName evidence="10">Endo-1,4-beta-xylanase 11A</fullName>
        <shortName evidence="10">Xylanase 11A</shortName>
        <ecNumber evidence="4 6">3.2.1.8</ecNumber>
    </recommendedName>
    <alternativeName>
        <fullName evidence="10">1,4-beta-D-xylan xylanohydrolase 11A</fullName>
    </alternativeName>
</protein>
<keyword id="KW-0119">Carbohydrate metabolism</keyword>
<keyword id="KW-0903">Direct protein sequencing</keyword>
<keyword id="KW-0326">Glycosidase</keyword>
<keyword id="KW-0378">Hydrolase</keyword>
<keyword id="KW-0624">Polysaccharide degradation</keyword>
<keyword id="KW-1185">Reference proteome</keyword>
<keyword id="KW-0964">Secreted</keyword>
<keyword id="KW-0732">Signal</keyword>
<keyword id="KW-0843">Virulence</keyword>
<keyword id="KW-0858">Xylan degradation</keyword>
<dbReference type="EC" id="3.2.1.8" evidence="4 6"/>
<dbReference type="EMBL" id="EU798759">
    <property type="protein sequence ID" value="ACF16413.1"/>
    <property type="molecule type" value="mRNA"/>
</dbReference>
<dbReference type="EMBL" id="CP009807">
    <property type="protein sequence ID" value="ATZ47739.1"/>
    <property type="molecule type" value="Genomic_DNA"/>
</dbReference>
<dbReference type="RefSeq" id="XP_024547454.1">
    <property type="nucleotide sequence ID" value="XM_024691683.1"/>
</dbReference>
<dbReference type="SMR" id="B3VSG7"/>
<dbReference type="CAZy" id="GH11">
    <property type="family name" value="Glycoside Hydrolase Family 11"/>
</dbReference>
<dbReference type="EnsemblFungi" id="Bcin03g00480.1">
    <property type="protein sequence ID" value="Bcin03p00480.1"/>
    <property type="gene ID" value="Bcin03g00480"/>
</dbReference>
<dbReference type="GeneID" id="36393994"/>
<dbReference type="VEuPathDB" id="FungiDB:Bcin03g00480"/>
<dbReference type="OrthoDB" id="2115822at2759"/>
<dbReference type="UniPathway" id="UPA00114"/>
<dbReference type="Proteomes" id="UP000001798">
    <property type="component" value="Chromosome bcin03"/>
</dbReference>
<dbReference type="GO" id="GO:0005576">
    <property type="term" value="C:extracellular region"/>
    <property type="evidence" value="ECO:0007669"/>
    <property type="project" value="UniProtKB-SubCell"/>
</dbReference>
<dbReference type="GO" id="GO:0031176">
    <property type="term" value="F:endo-1,4-beta-xylanase activity"/>
    <property type="evidence" value="ECO:0007669"/>
    <property type="project" value="UniProtKB-EC"/>
</dbReference>
<dbReference type="GO" id="GO:0045493">
    <property type="term" value="P:xylan catabolic process"/>
    <property type="evidence" value="ECO:0007669"/>
    <property type="project" value="UniProtKB-UniPathway"/>
</dbReference>
<dbReference type="FunFam" id="2.60.120.180:FF:000001">
    <property type="entry name" value="Endo-1,4-beta-xylanase"/>
    <property type="match status" value="1"/>
</dbReference>
<dbReference type="Gene3D" id="2.60.120.180">
    <property type="match status" value="1"/>
</dbReference>
<dbReference type="InterPro" id="IPR013320">
    <property type="entry name" value="ConA-like_dom_sf"/>
</dbReference>
<dbReference type="InterPro" id="IPR013319">
    <property type="entry name" value="GH11/12"/>
</dbReference>
<dbReference type="InterPro" id="IPR018208">
    <property type="entry name" value="GH11_AS_1"/>
</dbReference>
<dbReference type="InterPro" id="IPR033123">
    <property type="entry name" value="GH11_dom"/>
</dbReference>
<dbReference type="InterPro" id="IPR001137">
    <property type="entry name" value="Glyco_hydro_11"/>
</dbReference>
<dbReference type="PANTHER" id="PTHR46828">
    <property type="entry name" value="ENDO-1,4-BETA-XYLANASE A-RELATED"/>
    <property type="match status" value="1"/>
</dbReference>
<dbReference type="PANTHER" id="PTHR46828:SF2">
    <property type="entry name" value="ENDO-1,4-BETA-XYLANASE A-RELATED"/>
    <property type="match status" value="1"/>
</dbReference>
<dbReference type="Pfam" id="PF00457">
    <property type="entry name" value="Glyco_hydro_11"/>
    <property type="match status" value="1"/>
</dbReference>
<dbReference type="PRINTS" id="PR00911">
    <property type="entry name" value="GLHYDRLASE11"/>
</dbReference>
<dbReference type="SUPFAM" id="SSF49899">
    <property type="entry name" value="Concanavalin A-like lectins/glucanases"/>
    <property type="match status" value="1"/>
</dbReference>
<dbReference type="PROSITE" id="PS00776">
    <property type="entry name" value="GH11_1"/>
    <property type="match status" value="1"/>
</dbReference>
<dbReference type="PROSITE" id="PS00777">
    <property type="entry name" value="GH11_2"/>
    <property type="match status" value="1"/>
</dbReference>
<dbReference type="PROSITE" id="PS51761">
    <property type="entry name" value="GH11_3"/>
    <property type="match status" value="1"/>
</dbReference>
<feature type="signal peptide" evidence="1">
    <location>
        <begin position="1"/>
        <end position="36"/>
    </location>
</feature>
<feature type="chain" id="PRO_0000429752" description="Endo-1,4-beta-xylanase 11A">
    <location>
        <begin position="37"/>
        <end position="227"/>
    </location>
</feature>
<feature type="domain" description="GH11" evidence="2">
    <location>
        <begin position="37"/>
        <end position="227"/>
    </location>
</feature>
<feature type="region of interest" description="Necrosis inducing domain" evidence="6">
    <location>
        <begin position="112"/>
        <end position="136"/>
    </location>
</feature>
<feature type="active site" description="Nucleophile" evidence="3">
    <location>
        <position position="122"/>
    </location>
</feature>
<feature type="active site" description="Proton donor" evidence="12">
    <location>
        <position position="214"/>
    </location>
</feature>
<feature type="mutagenesis site" description="Does not affect the pathogenesis." evidence="6">
    <original>E</original>
    <variation>S</variation>
    <location>
        <position position="122"/>
    </location>
</feature>
<feature type="mutagenesis site" description="Does not affect the pathogenesis." evidence="6">
    <original>E</original>
    <variation>S</variation>
    <location>
        <position position="214"/>
    </location>
</feature>
<feature type="sequence conflict" description="In Ref. 1; ACF16413/ATZ47739." evidence="11" ref="1">
    <original>A</original>
    <variation>D</variation>
    <location>
        <position position="67"/>
    </location>
</feature>
<feature type="sequence conflict" description="In Ref. 1; ACF16413/ATZ47739." evidence="11" ref="1">
    <original>S</original>
    <variation>F</variation>
    <location>
        <position position="118"/>
    </location>
</feature>
<feature type="sequence conflict" description="In Ref. 1; ACF16413/ATZ47739." evidence="11" ref="1">
    <original>V</original>
    <variation>I</variation>
    <location>
        <position position="164"/>
    </location>
</feature>
<feature type="sequence conflict" description="In Ref. 1; ACF16413/ATZ47739." evidence="11" ref="1">
    <original>N</original>
    <variation>D</variation>
    <location>
        <position position="207"/>
    </location>
</feature>
<feature type="sequence conflict" description="In Ref. 1; ACF16413/ATZ47739." evidence="11" ref="1">
    <location>
        <position position="219"/>
    </location>
</feature>
<sequence>MVSASSLLLAASAIAGVFSAPAAAPVSENLNVLQERALTSSATGTSGGYYYSFWTDGSGGVTYSNGANGQYAVSWTGNKGNFVGGKGWAVGSERSISYTGSYKPNGNSYLSVYGWTTSPLIEYYIVEDFGTYDPSSAATEIGSVTSDGSTYKILETTRTNQPSVQGTATFKQYWSVRTSKRTSGTVTTANHFAAWKKLGLTLGSTYNYQIVAVEGYQSSGSASITVS</sequence>
<comment type="function">
    <text evidence="4 5 6 7 9">Endo-1,4-beta-xylanase involved in the hydrolysis of xylan, a major structural heterogeneous polysaccharide found in plant biomass representing the second most abundant polysaccharide in the biosphere, after cellulose (PubMed:16185656, PubMed:16404950, PubMed:20184750). Required for plant infection and the appearance of secondary lesions (PubMed:16185656, PubMed:16404950, PubMed:20184750, PubMed:31057580). Is able to induce necrosis on leaves, seedling growth inhibition, induction of a ROS burst, electrolyte leakage, cytoplasm shrinkage, autofluorescence, cell death, and induction of defense genes, and this abilities are independent of the catalytic activity (PubMed:20184750, PubMed:31057580). Only exhibits elicitor activity in certain plants such as tomato, but not in N.benthamiana (PubMed:20184750, PubMed:31057580, PubMed:33205907).</text>
</comment>
<comment type="catalytic activity">
    <reaction evidence="4 6">
        <text>Endohydrolysis of (1-&gt;4)-beta-D-xylosidic linkages in xylans.</text>
        <dbReference type="EC" id="3.2.1.8"/>
    </reaction>
</comment>
<comment type="activity regulation">
    <text evidence="4">Significantly inhibited by the wheat xylanase inhibiting protein I (XIP-I) and the proteinaceous endoxylanase Triticum aestivum xylanase inhibitors I (TAXI-I), whereas no inhibition is detected with TAXI-II.</text>
</comment>
<comment type="biophysicochemical properties">
    <kinetics>
        <KM evidence="4">10 mg/ml for low viscosity xylan</KM>
        <Vmax evidence="4">0.5 umol/min/mg enzyme toward xylose</Vmax>
    </kinetics>
    <phDependence>
        <text evidence="4">Optimum pH is 4.5-5.0.</text>
    </phDependence>
    <temperatureDependence>
        <text evidence="4">Optimum temperature is between 38 and 42 degrees Celsius.</text>
    </temperatureDependence>
</comment>
<comment type="pathway">
    <text evidence="4 6">Glycan degradation; xylan degradation.</text>
</comment>
<comment type="subcellular location">
    <subcellularLocation>
        <location evidence="4 6">Secreted</location>
    </subcellularLocation>
</comment>
<comment type="induction">
    <text evidence="4 8">Shows constitutive expression during the early stage of tobacco leaves infection (PubMed:16185656). Expression is not affected by the fungicide carbendazim (PubMed:31313639).</text>
</comment>
<comment type="domain">
    <text evidence="6 7">The 25 amino acids necrosis inducing domain is localized at the protein surface where it mediates binding to the plant cell surface as well as induction of the necrosis on leaves, seedling growth inhibition, induction of a ROS burst, electrolyte leakage, cytoplasm shrinkage, autofluorescence, cell death, and induction of defense genes.</text>
</comment>
<comment type="disruption phenotype">
    <text evidence="5">Causes only a moderate decrease, about 30%, in the level of extracellular endo-beta-1-4-xylanase activity and in the growth rate, but affects virulence, delaying the appearance of secondary lesions and reducing the average lesion size by more than 70%.</text>
</comment>
<comment type="similarity">
    <text evidence="11">Belongs to the glycosyl hydrolase 11 (cellulase G) family.</text>
</comment>